<reference key="1">
    <citation type="journal article" date="2000" name="DNA Res.">
        <title>Complete genome structure of the nitrogen-fixing symbiotic bacterium Mesorhizobium loti.</title>
        <authorList>
            <person name="Kaneko T."/>
            <person name="Nakamura Y."/>
            <person name="Sato S."/>
            <person name="Asamizu E."/>
            <person name="Kato T."/>
            <person name="Sasamoto S."/>
            <person name="Watanabe A."/>
            <person name="Idesawa K."/>
            <person name="Ishikawa A."/>
            <person name="Kawashima K."/>
            <person name="Kimura T."/>
            <person name="Kishida Y."/>
            <person name="Kiyokawa C."/>
            <person name="Kohara M."/>
            <person name="Matsumoto M."/>
            <person name="Matsuno A."/>
            <person name="Mochizuki Y."/>
            <person name="Nakayama S."/>
            <person name="Nakazaki N."/>
            <person name="Shimpo S."/>
            <person name="Sugimoto M."/>
            <person name="Takeuchi C."/>
            <person name="Yamada M."/>
            <person name="Tabata S."/>
        </authorList>
    </citation>
    <scope>NUCLEOTIDE SEQUENCE [LARGE SCALE GENOMIC DNA]</scope>
    <source>
        <strain>LMG 29417 / CECT 9101 / MAFF 303099</strain>
    </source>
</reference>
<sequence>MPEPRRSTIDAGEVERFSALAAEWWNPNGKFRPLHKFNPVRLSYIRDQIAARFGRDPRAARPFEGLRILDIGCGGGLLCEPMARLGAEVVGADASETNIEVAKLHAAEGNVIVDYRATTAEDLADAGETFDVILNMEVVEHVADIDLFVAKCGQMVRPGGIMFVATINRTLKALGLAIIGAEYVLRWLPRGTHQFGKLVRPEELEKALGGASLTIIDRTGVTYNPLADRWARSKDMDVNYMVLAEKGSV</sequence>
<comment type="function">
    <text evidence="1">O-methyltransferase that catalyzes the 2 O-methylation steps in the ubiquinone biosynthetic pathway.</text>
</comment>
<comment type="catalytic activity">
    <reaction evidence="1">
        <text>a 3-demethylubiquinol + S-adenosyl-L-methionine = a ubiquinol + S-adenosyl-L-homocysteine + H(+)</text>
        <dbReference type="Rhea" id="RHEA:44380"/>
        <dbReference type="Rhea" id="RHEA-COMP:9566"/>
        <dbReference type="Rhea" id="RHEA-COMP:10914"/>
        <dbReference type="ChEBI" id="CHEBI:15378"/>
        <dbReference type="ChEBI" id="CHEBI:17976"/>
        <dbReference type="ChEBI" id="CHEBI:57856"/>
        <dbReference type="ChEBI" id="CHEBI:59789"/>
        <dbReference type="ChEBI" id="CHEBI:84422"/>
        <dbReference type="EC" id="2.1.1.64"/>
    </reaction>
</comment>
<comment type="catalytic activity">
    <reaction evidence="1">
        <text>a 3-(all-trans-polyprenyl)benzene-1,2-diol + S-adenosyl-L-methionine = a 2-methoxy-6-(all-trans-polyprenyl)phenol + S-adenosyl-L-homocysteine + H(+)</text>
        <dbReference type="Rhea" id="RHEA:31411"/>
        <dbReference type="Rhea" id="RHEA-COMP:9550"/>
        <dbReference type="Rhea" id="RHEA-COMP:9551"/>
        <dbReference type="ChEBI" id="CHEBI:15378"/>
        <dbReference type="ChEBI" id="CHEBI:57856"/>
        <dbReference type="ChEBI" id="CHEBI:59789"/>
        <dbReference type="ChEBI" id="CHEBI:62729"/>
        <dbReference type="ChEBI" id="CHEBI:62731"/>
        <dbReference type="EC" id="2.1.1.222"/>
    </reaction>
</comment>
<comment type="pathway">
    <text evidence="1">Cofactor biosynthesis; ubiquinone biosynthesis.</text>
</comment>
<comment type="similarity">
    <text evidence="1">Belongs to the methyltransferase superfamily. UbiG/COQ3 family.</text>
</comment>
<accession>Q98G87</accession>
<name>UBIG_RHILO</name>
<keyword id="KW-0489">Methyltransferase</keyword>
<keyword id="KW-0949">S-adenosyl-L-methionine</keyword>
<keyword id="KW-0808">Transferase</keyword>
<keyword id="KW-0831">Ubiquinone biosynthesis</keyword>
<protein>
    <recommendedName>
        <fullName evidence="1">Ubiquinone biosynthesis O-methyltransferase</fullName>
    </recommendedName>
    <alternativeName>
        <fullName evidence="1">2-polyprenyl-6-hydroxyphenol methylase</fullName>
        <ecNumber evidence="1">2.1.1.222</ecNumber>
    </alternativeName>
    <alternativeName>
        <fullName evidence="1">3-demethylubiquinone 3-O-methyltransferase</fullName>
        <ecNumber evidence="1">2.1.1.64</ecNumber>
    </alternativeName>
</protein>
<gene>
    <name evidence="1" type="primary">ubiG</name>
    <name type="ordered locus">mlr3442</name>
</gene>
<dbReference type="EC" id="2.1.1.222" evidence="1"/>
<dbReference type="EC" id="2.1.1.64" evidence="1"/>
<dbReference type="EMBL" id="BA000012">
    <property type="protein sequence ID" value="BAB50329.1"/>
    <property type="molecule type" value="Genomic_DNA"/>
</dbReference>
<dbReference type="RefSeq" id="WP_010911675.1">
    <property type="nucleotide sequence ID" value="NC_002678.2"/>
</dbReference>
<dbReference type="SMR" id="Q98G87"/>
<dbReference type="DNASU" id="1227204"/>
<dbReference type="GeneID" id="66681891"/>
<dbReference type="KEGG" id="mlo:mlr3442"/>
<dbReference type="eggNOG" id="COG2227">
    <property type="taxonomic scope" value="Bacteria"/>
</dbReference>
<dbReference type="HOGENOM" id="CLU_042432_0_0_5"/>
<dbReference type="UniPathway" id="UPA00232"/>
<dbReference type="Proteomes" id="UP000000552">
    <property type="component" value="Chromosome"/>
</dbReference>
<dbReference type="GO" id="GO:0102208">
    <property type="term" value="F:2-polyprenyl-6-hydroxyphenol methylase activity"/>
    <property type="evidence" value="ECO:0007669"/>
    <property type="project" value="UniProtKB-EC"/>
</dbReference>
<dbReference type="GO" id="GO:0061542">
    <property type="term" value="F:3-demethylubiquinol 3-O-methyltransferase activity"/>
    <property type="evidence" value="ECO:0007669"/>
    <property type="project" value="UniProtKB-UniRule"/>
</dbReference>
<dbReference type="GO" id="GO:0010420">
    <property type="term" value="F:polyprenyldihydroxybenzoate methyltransferase activity"/>
    <property type="evidence" value="ECO:0007669"/>
    <property type="project" value="InterPro"/>
</dbReference>
<dbReference type="GO" id="GO:0032259">
    <property type="term" value="P:methylation"/>
    <property type="evidence" value="ECO:0007669"/>
    <property type="project" value="UniProtKB-KW"/>
</dbReference>
<dbReference type="CDD" id="cd02440">
    <property type="entry name" value="AdoMet_MTases"/>
    <property type="match status" value="1"/>
</dbReference>
<dbReference type="Gene3D" id="3.40.50.150">
    <property type="entry name" value="Vaccinia Virus protein VP39"/>
    <property type="match status" value="1"/>
</dbReference>
<dbReference type="HAMAP" id="MF_00472">
    <property type="entry name" value="UbiG"/>
    <property type="match status" value="1"/>
</dbReference>
<dbReference type="InterPro" id="IPR029063">
    <property type="entry name" value="SAM-dependent_MTases_sf"/>
</dbReference>
<dbReference type="InterPro" id="IPR010233">
    <property type="entry name" value="UbiG_MeTrfase"/>
</dbReference>
<dbReference type="NCBIfam" id="TIGR01983">
    <property type="entry name" value="UbiG"/>
    <property type="match status" value="1"/>
</dbReference>
<dbReference type="PANTHER" id="PTHR43464">
    <property type="entry name" value="METHYLTRANSFERASE"/>
    <property type="match status" value="1"/>
</dbReference>
<dbReference type="PANTHER" id="PTHR43464:SF19">
    <property type="entry name" value="UBIQUINONE BIOSYNTHESIS O-METHYLTRANSFERASE, MITOCHONDRIAL"/>
    <property type="match status" value="1"/>
</dbReference>
<dbReference type="Pfam" id="PF13489">
    <property type="entry name" value="Methyltransf_23"/>
    <property type="match status" value="1"/>
</dbReference>
<dbReference type="SUPFAM" id="SSF53335">
    <property type="entry name" value="S-adenosyl-L-methionine-dependent methyltransferases"/>
    <property type="match status" value="1"/>
</dbReference>
<organism>
    <name type="scientific">Mesorhizobium japonicum (strain LMG 29417 / CECT 9101 / MAFF 303099)</name>
    <name type="common">Mesorhizobium loti (strain MAFF 303099)</name>
    <dbReference type="NCBI Taxonomy" id="266835"/>
    <lineage>
        <taxon>Bacteria</taxon>
        <taxon>Pseudomonadati</taxon>
        <taxon>Pseudomonadota</taxon>
        <taxon>Alphaproteobacteria</taxon>
        <taxon>Hyphomicrobiales</taxon>
        <taxon>Phyllobacteriaceae</taxon>
        <taxon>Mesorhizobium</taxon>
    </lineage>
</organism>
<evidence type="ECO:0000255" key="1">
    <source>
        <dbReference type="HAMAP-Rule" id="MF_00472"/>
    </source>
</evidence>
<feature type="chain" id="PRO_0000193395" description="Ubiquinone biosynthesis O-methyltransferase">
    <location>
        <begin position="1"/>
        <end position="249"/>
    </location>
</feature>
<feature type="binding site" evidence="1">
    <location>
        <position position="41"/>
    </location>
    <ligand>
        <name>S-adenosyl-L-methionine</name>
        <dbReference type="ChEBI" id="CHEBI:59789"/>
    </ligand>
</feature>
<feature type="binding site" evidence="1">
    <location>
        <position position="72"/>
    </location>
    <ligand>
        <name>S-adenosyl-L-methionine</name>
        <dbReference type="ChEBI" id="CHEBI:59789"/>
    </ligand>
</feature>
<feature type="binding site" evidence="1">
    <location>
        <position position="93"/>
    </location>
    <ligand>
        <name>S-adenosyl-L-methionine</name>
        <dbReference type="ChEBI" id="CHEBI:59789"/>
    </ligand>
</feature>
<feature type="binding site" evidence="1">
    <location>
        <position position="136"/>
    </location>
    <ligand>
        <name>S-adenosyl-L-methionine</name>
        <dbReference type="ChEBI" id="CHEBI:59789"/>
    </ligand>
</feature>
<proteinExistence type="inferred from homology"/>